<comment type="function">
    <text evidence="1">Catalyzes the conversion of dethiobiotin (DTB) to biotin by the insertion of a sulfur atom into dethiobiotin via a radical-based mechanism.</text>
</comment>
<comment type="catalytic activity">
    <reaction evidence="1">
        <text>(4R,5S)-dethiobiotin + (sulfur carrier)-SH + 2 reduced [2Fe-2S]-[ferredoxin] + 2 S-adenosyl-L-methionine = (sulfur carrier)-H + biotin + 2 5'-deoxyadenosine + 2 L-methionine + 2 oxidized [2Fe-2S]-[ferredoxin]</text>
        <dbReference type="Rhea" id="RHEA:22060"/>
        <dbReference type="Rhea" id="RHEA-COMP:10000"/>
        <dbReference type="Rhea" id="RHEA-COMP:10001"/>
        <dbReference type="Rhea" id="RHEA-COMP:14737"/>
        <dbReference type="Rhea" id="RHEA-COMP:14739"/>
        <dbReference type="ChEBI" id="CHEBI:17319"/>
        <dbReference type="ChEBI" id="CHEBI:29917"/>
        <dbReference type="ChEBI" id="CHEBI:33737"/>
        <dbReference type="ChEBI" id="CHEBI:33738"/>
        <dbReference type="ChEBI" id="CHEBI:57586"/>
        <dbReference type="ChEBI" id="CHEBI:57844"/>
        <dbReference type="ChEBI" id="CHEBI:59789"/>
        <dbReference type="ChEBI" id="CHEBI:64428"/>
        <dbReference type="ChEBI" id="CHEBI:149473"/>
        <dbReference type="EC" id="2.8.1.6"/>
    </reaction>
</comment>
<comment type="cofactor">
    <cofactor evidence="1">
        <name>[4Fe-4S] cluster</name>
        <dbReference type="ChEBI" id="CHEBI:49883"/>
    </cofactor>
    <text evidence="1">Binds 1 [4Fe-4S] cluster. The cluster is coordinated with 3 cysteines and an exchangeable S-adenosyl-L-methionine.</text>
</comment>
<comment type="cofactor">
    <cofactor evidence="1">
        <name>[2Fe-2S] cluster</name>
        <dbReference type="ChEBI" id="CHEBI:190135"/>
    </cofactor>
    <text evidence="1">Binds 1 [2Fe-2S] cluster. The cluster is coordinated with 3 cysteines and 1 arginine.</text>
</comment>
<comment type="pathway">
    <text evidence="1">Cofactor biosynthesis; biotin biosynthesis; biotin from 7,8-diaminononanoate: step 2/2.</text>
</comment>
<comment type="subunit">
    <text evidence="1">Homodimer.</text>
</comment>
<comment type="similarity">
    <text evidence="1">Belongs to the radical SAM superfamily. Biotin synthase family.</text>
</comment>
<keyword id="KW-0001">2Fe-2S</keyword>
<keyword id="KW-0004">4Fe-4S</keyword>
<keyword id="KW-0093">Biotin biosynthesis</keyword>
<keyword id="KW-0408">Iron</keyword>
<keyword id="KW-0411">Iron-sulfur</keyword>
<keyword id="KW-0479">Metal-binding</keyword>
<keyword id="KW-0949">S-adenosyl-L-methionine</keyword>
<keyword id="KW-0808">Transferase</keyword>
<gene>
    <name evidence="1" type="primary">bioB</name>
    <name type="ordered locus">SeD_A0889</name>
</gene>
<feature type="chain" id="PRO_0000381598" description="Biotin synthase">
    <location>
        <begin position="1"/>
        <end position="346"/>
    </location>
</feature>
<feature type="domain" description="Radical SAM core" evidence="2">
    <location>
        <begin position="38"/>
        <end position="256"/>
    </location>
</feature>
<feature type="binding site" evidence="1">
    <location>
        <position position="53"/>
    </location>
    <ligand>
        <name>[4Fe-4S] cluster</name>
        <dbReference type="ChEBI" id="CHEBI:49883"/>
        <note>4Fe-4S-S-AdoMet</note>
    </ligand>
</feature>
<feature type="binding site" evidence="1">
    <location>
        <position position="57"/>
    </location>
    <ligand>
        <name>[4Fe-4S] cluster</name>
        <dbReference type="ChEBI" id="CHEBI:49883"/>
        <note>4Fe-4S-S-AdoMet</note>
    </ligand>
</feature>
<feature type="binding site" evidence="1">
    <location>
        <position position="60"/>
    </location>
    <ligand>
        <name>[4Fe-4S] cluster</name>
        <dbReference type="ChEBI" id="CHEBI:49883"/>
        <note>4Fe-4S-S-AdoMet</note>
    </ligand>
</feature>
<feature type="binding site" evidence="1">
    <location>
        <position position="97"/>
    </location>
    <ligand>
        <name>[2Fe-2S] cluster</name>
        <dbReference type="ChEBI" id="CHEBI:190135"/>
    </ligand>
</feature>
<feature type="binding site" evidence="1">
    <location>
        <position position="128"/>
    </location>
    <ligand>
        <name>[2Fe-2S] cluster</name>
        <dbReference type="ChEBI" id="CHEBI:190135"/>
    </ligand>
</feature>
<feature type="binding site" evidence="1">
    <location>
        <position position="188"/>
    </location>
    <ligand>
        <name>[2Fe-2S] cluster</name>
        <dbReference type="ChEBI" id="CHEBI:190135"/>
    </ligand>
</feature>
<feature type="binding site" evidence="1">
    <location>
        <position position="260"/>
    </location>
    <ligand>
        <name>[2Fe-2S] cluster</name>
        <dbReference type="ChEBI" id="CHEBI:190135"/>
    </ligand>
</feature>
<accession>B5FP61</accession>
<dbReference type="EC" id="2.8.1.6" evidence="1"/>
<dbReference type="EMBL" id="CP001144">
    <property type="protein sequence ID" value="ACH76274.1"/>
    <property type="molecule type" value="Genomic_DNA"/>
</dbReference>
<dbReference type="RefSeq" id="WP_000090727.1">
    <property type="nucleotide sequence ID" value="NC_011205.1"/>
</dbReference>
<dbReference type="SMR" id="B5FP61"/>
<dbReference type="KEGG" id="sed:SeD_A0889"/>
<dbReference type="HOGENOM" id="CLU_033172_1_2_6"/>
<dbReference type="UniPathway" id="UPA00078">
    <property type="reaction ID" value="UER00162"/>
</dbReference>
<dbReference type="Proteomes" id="UP000008322">
    <property type="component" value="Chromosome"/>
</dbReference>
<dbReference type="GO" id="GO:0051537">
    <property type="term" value="F:2 iron, 2 sulfur cluster binding"/>
    <property type="evidence" value="ECO:0007669"/>
    <property type="project" value="UniProtKB-KW"/>
</dbReference>
<dbReference type="GO" id="GO:0051539">
    <property type="term" value="F:4 iron, 4 sulfur cluster binding"/>
    <property type="evidence" value="ECO:0007669"/>
    <property type="project" value="UniProtKB-KW"/>
</dbReference>
<dbReference type="GO" id="GO:0004076">
    <property type="term" value="F:biotin synthase activity"/>
    <property type="evidence" value="ECO:0007669"/>
    <property type="project" value="UniProtKB-UniRule"/>
</dbReference>
<dbReference type="GO" id="GO:0005506">
    <property type="term" value="F:iron ion binding"/>
    <property type="evidence" value="ECO:0007669"/>
    <property type="project" value="UniProtKB-UniRule"/>
</dbReference>
<dbReference type="GO" id="GO:0009102">
    <property type="term" value="P:biotin biosynthetic process"/>
    <property type="evidence" value="ECO:0007669"/>
    <property type="project" value="UniProtKB-UniRule"/>
</dbReference>
<dbReference type="CDD" id="cd01335">
    <property type="entry name" value="Radical_SAM"/>
    <property type="match status" value="1"/>
</dbReference>
<dbReference type="FunFam" id="3.20.20.70:FF:000011">
    <property type="entry name" value="Biotin synthase"/>
    <property type="match status" value="1"/>
</dbReference>
<dbReference type="Gene3D" id="3.20.20.70">
    <property type="entry name" value="Aldolase class I"/>
    <property type="match status" value="1"/>
</dbReference>
<dbReference type="HAMAP" id="MF_01694">
    <property type="entry name" value="BioB"/>
    <property type="match status" value="1"/>
</dbReference>
<dbReference type="InterPro" id="IPR013785">
    <property type="entry name" value="Aldolase_TIM"/>
</dbReference>
<dbReference type="InterPro" id="IPR010722">
    <property type="entry name" value="BATS_dom"/>
</dbReference>
<dbReference type="InterPro" id="IPR002684">
    <property type="entry name" value="Biotin_synth/BioAB"/>
</dbReference>
<dbReference type="InterPro" id="IPR024177">
    <property type="entry name" value="Biotin_synthase"/>
</dbReference>
<dbReference type="InterPro" id="IPR006638">
    <property type="entry name" value="Elp3/MiaA/NifB-like_rSAM"/>
</dbReference>
<dbReference type="InterPro" id="IPR007197">
    <property type="entry name" value="rSAM"/>
</dbReference>
<dbReference type="NCBIfam" id="TIGR00433">
    <property type="entry name" value="bioB"/>
    <property type="match status" value="1"/>
</dbReference>
<dbReference type="PANTHER" id="PTHR22976">
    <property type="entry name" value="BIOTIN SYNTHASE"/>
    <property type="match status" value="1"/>
</dbReference>
<dbReference type="PANTHER" id="PTHR22976:SF2">
    <property type="entry name" value="BIOTIN SYNTHASE, MITOCHONDRIAL"/>
    <property type="match status" value="1"/>
</dbReference>
<dbReference type="Pfam" id="PF06968">
    <property type="entry name" value="BATS"/>
    <property type="match status" value="1"/>
</dbReference>
<dbReference type="Pfam" id="PF04055">
    <property type="entry name" value="Radical_SAM"/>
    <property type="match status" value="1"/>
</dbReference>
<dbReference type="PIRSF" id="PIRSF001619">
    <property type="entry name" value="Biotin_synth"/>
    <property type="match status" value="1"/>
</dbReference>
<dbReference type="SFLD" id="SFLDF00272">
    <property type="entry name" value="biotin_synthase"/>
    <property type="match status" value="1"/>
</dbReference>
<dbReference type="SFLD" id="SFLDS00029">
    <property type="entry name" value="Radical_SAM"/>
    <property type="match status" value="1"/>
</dbReference>
<dbReference type="SMART" id="SM00876">
    <property type="entry name" value="BATS"/>
    <property type="match status" value="1"/>
</dbReference>
<dbReference type="SMART" id="SM00729">
    <property type="entry name" value="Elp3"/>
    <property type="match status" value="1"/>
</dbReference>
<dbReference type="SUPFAM" id="SSF102114">
    <property type="entry name" value="Radical SAM enzymes"/>
    <property type="match status" value="1"/>
</dbReference>
<dbReference type="PROSITE" id="PS51918">
    <property type="entry name" value="RADICAL_SAM"/>
    <property type="match status" value="1"/>
</dbReference>
<reference key="1">
    <citation type="journal article" date="2011" name="J. Bacteriol.">
        <title>Comparative genomics of 28 Salmonella enterica isolates: evidence for CRISPR-mediated adaptive sublineage evolution.</title>
        <authorList>
            <person name="Fricke W.F."/>
            <person name="Mammel M.K."/>
            <person name="McDermott P.F."/>
            <person name="Tartera C."/>
            <person name="White D.G."/>
            <person name="Leclerc J.E."/>
            <person name="Ravel J."/>
            <person name="Cebula T.A."/>
        </authorList>
    </citation>
    <scope>NUCLEOTIDE SEQUENCE [LARGE SCALE GENOMIC DNA]</scope>
    <source>
        <strain>CT_02021853</strain>
    </source>
</reference>
<name>BIOB_SALDC</name>
<protein>
    <recommendedName>
        <fullName evidence="1">Biotin synthase</fullName>
        <ecNumber evidence="1">2.8.1.6</ecNumber>
    </recommendedName>
</protein>
<evidence type="ECO:0000255" key="1">
    <source>
        <dbReference type="HAMAP-Rule" id="MF_01694"/>
    </source>
</evidence>
<evidence type="ECO:0000255" key="2">
    <source>
        <dbReference type="PROSITE-ProRule" id="PRU01266"/>
    </source>
</evidence>
<sequence>MARHPRWTLSQVTELFEKPLLELLFEAQQIHRQHFDPQQVQVSTLLSIKTGACPEDCKYCPQSSRYKTGLEAERLMEVEQVLDSARKAKNAGSTRFCMGAAWKNPHERDMPYLEQIVQGVKAMGLETCMTLGMLNESQAQRLANAGLDYYNHNLDTSPEFYGNIITTRTYQERLDTLEKVREAGIKVCSGGIVGLGETVTDRAGLLLQLANLPTPPESVPINMLVKVKGTPLADNDDVDAFDFIRTIAVARIMMPTSYVRLSAGREQMNEQTQAMCFMAGANSIFYGCKLLTTPNPAEDKDLQLFRKLGLNPQQTRVLAGDNEQQQRLEQTLMTPDTDDYYNAAAL</sequence>
<proteinExistence type="inferred from homology"/>
<organism>
    <name type="scientific">Salmonella dublin (strain CT_02021853)</name>
    <dbReference type="NCBI Taxonomy" id="439851"/>
    <lineage>
        <taxon>Bacteria</taxon>
        <taxon>Pseudomonadati</taxon>
        <taxon>Pseudomonadota</taxon>
        <taxon>Gammaproteobacteria</taxon>
        <taxon>Enterobacterales</taxon>
        <taxon>Enterobacteriaceae</taxon>
        <taxon>Salmonella</taxon>
    </lineage>
</organism>